<protein>
    <recommendedName>
        <fullName>UPF0065 protein BP0148</fullName>
    </recommendedName>
    <alternativeName>
        <fullName>ORF5</fullName>
    </alternativeName>
</protein>
<name>Y148_BORPE</name>
<comment type="subcellular location">
    <subcellularLocation>
        <location evidence="2">Periplasm</location>
    </subcellularLocation>
</comment>
<comment type="similarity">
    <text evidence="2">Belongs to the UPF0065 (bug) family.</text>
</comment>
<accession>O30446</accession>
<proteinExistence type="inferred from homology"/>
<keyword id="KW-0574">Periplasm</keyword>
<keyword id="KW-1185">Reference proteome</keyword>
<keyword id="KW-0732">Signal</keyword>
<feature type="signal peptide" evidence="1">
    <location>
        <begin position="1"/>
        <end position="24"/>
    </location>
</feature>
<feature type="chain" id="PRO_0000036198" description="UPF0065 protein BP0148">
    <location>
        <begin position="25"/>
        <end position="323"/>
    </location>
</feature>
<dbReference type="EMBL" id="AF006000">
    <property type="protein sequence ID" value="AAC46265.1"/>
    <property type="molecule type" value="Genomic_DNA"/>
</dbReference>
<dbReference type="EMBL" id="BX640411">
    <property type="protein sequence ID" value="CAE40527.1"/>
    <property type="molecule type" value="Genomic_DNA"/>
</dbReference>
<dbReference type="RefSeq" id="NP_879042.1">
    <property type="nucleotide sequence ID" value="NC_002929.2"/>
</dbReference>
<dbReference type="RefSeq" id="WP_010929647.1">
    <property type="nucleotide sequence ID" value="NZ_CP039022.1"/>
</dbReference>
<dbReference type="SMR" id="O30446"/>
<dbReference type="STRING" id="257313.BP0148"/>
<dbReference type="PaxDb" id="257313-BP0148"/>
<dbReference type="KEGG" id="bpe:BP0148"/>
<dbReference type="PATRIC" id="fig|257313.5.peg.154"/>
<dbReference type="eggNOG" id="COG3181">
    <property type="taxonomic scope" value="Bacteria"/>
</dbReference>
<dbReference type="HOGENOM" id="CLU_045683_0_0_4"/>
<dbReference type="Proteomes" id="UP000002676">
    <property type="component" value="Chromosome"/>
</dbReference>
<dbReference type="GO" id="GO:0042597">
    <property type="term" value="C:periplasmic space"/>
    <property type="evidence" value="ECO:0007669"/>
    <property type="project" value="UniProtKB-SubCell"/>
</dbReference>
<dbReference type="CDD" id="cd07012">
    <property type="entry name" value="PBP2_Bug_TTT"/>
    <property type="match status" value="1"/>
</dbReference>
<dbReference type="Gene3D" id="3.40.190.150">
    <property type="entry name" value="Bordetella uptake gene, domain 1"/>
    <property type="match status" value="1"/>
</dbReference>
<dbReference type="Gene3D" id="3.40.190.10">
    <property type="entry name" value="Periplasmic binding protein-like II"/>
    <property type="match status" value="1"/>
</dbReference>
<dbReference type="InterPro" id="IPR005064">
    <property type="entry name" value="BUG"/>
</dbReference>
<dbReference type="InterPro" id="IPR042100">
    <property type="entry name" value="Bug_dom1"/>
</dbReference>
<dbReference type="PANTHER" id="PTHR42928:SF5">
    <property type="entry name" value="BLR1237 PROTEIN"/>
    <property type="match status" value="1"/>
</dbReference>
<dbReference type="PANTHER" id="PTHR42928">
    <property type="entry name" value="TRICARBOXYLATE-BINDING PROTEIN"/>
    <property type="match status" value="1"/>
</dbReference>
<dbReference type="Pfam" id="PF03401">
    <property type="entry name" value="TctC"/>
    <property type="match status" value="1"/>
</dbReference>
<dbReference type="PIRSF" id="PIRSF017082">
    <property type="entry name" value="YflP"/>
    <property type="match status" value="1"/>
</dbReference>
<dbReference type="SUPFAM" id="SSF53850">
    <property type="entry name" value="Periplasmic binding protein-like II"/>
    <property type="match status" value="1"/>
</dbReference>
<organism>
    <name type="scientific">Bordetella pertussis (strain Tohama I / ATCC BAA-589 / NCTC 13251)</name>
    <dbReference type="NCBI Taxonomy" id="257313"/>
    <lineage>
        <taxon>Bacteria</taxon>
        <taxon>Pseudomonadati</taxon>
        <taxon>Pseudomonadota</taxon>
        <taxon>Betaproteobacteria</taxon>
        <taxon>Burkholderiales</taxon>
        <taxon>Alcaligenaceae</taxon>
        <taxon>Bordetella</taxon>
    </lineage>
</organism>
<reference key="1">
    <citation type="journal article" date="1998" name="Gene">
        <title>Identification of Btr-regulated genes using a titration assay. Search for a role for this transcriptional regulator in the growth and virulence of Bordetella pertussis.</title>
        <authorList>
            <person name="Wood G.E."/>
            <person name="Khelef N."/>
            <person name="Guiso N."/>
            <person name="Friedman R.L."/>
        </authorList>
    </citation>
    <scope>NUCLEOTIDE SEQUENCE [GENOMIC DNA]</scope>
    <source>
        <strain>Tohama I / BP338</strain>
    </source>
</reference>
<reference key="2">
    <citation type="journal article" date="2003" name="Nat. Genet.">
        <title>Comparative analysis of the genome sequences of Bordetella pertussis, Bordetella parapertussis and Bordetella bronchiseptica.</title>
        <authorList>
            <person name="Parkhill J."/>
            <person name="Sebaihia M."/>
            <person name="Preston A."/>
            <person name="Murphy L.D."/>
            <person name="Thomson N.R."/>
            <person name="Harris D.E."/>
            <person name="Holden M.T.G."/>
            <person name="Churcher C.M."/>
            <person name="Bentley S.D."/>
            <person name="Mungall K.L."/>
            <person name="Cerdeno-Tarraga A.-M."/>
            <person name="Temple L."/>
            <person name="James K.D."/>
            <person name="Harris B."/>
            <person name="Quail M.A."/>
            <person name="Achtman M."/>
            <person name="Atkin R."/>
            <person name="Baker S."/>
            <person name="Basham D."/>
            <person name="Bason N."/>
            <person name="Cherevach I."/>
            <person name="Chillingworth T."/>
            <person name="Collins M."/>
            <person name="Cronin A."/>
            <person name="Davis P."/>
            <person name="Doggett J."/>
            <person name="Feltwell T."/>
            <person name="Goble A."/>
            <person name="Hamlin N."/>
            <person name="Hauser H."/>
            <person name="Holroyd S."/>
            <person name="Jagels K."/>
            <person name="Leather S."/>
            <person name="Moule S."/>
            <person name="Norberczak H."/>
            <person name="O'Neil S."/>
            <person name="Ormond D."/>
            <person name="Price C."/>
            <person name="Rabbinowitsch E."/>
            <person name="Rutter S."/>
            <person name="Sanders M."/>
            <person name="Saunders D."/>
            <person name="Seeger K."/>
            <person name="Sharp S."/>
            <person name="Simmonds M."/>
            <person name="Skelton J."/>
            <person name="Squares R."/>
            <person name="Squares S."/>
            <person name="Stevens K."/>
            <person name="Unwin L."/>
            <person name="Whitehead S."/>
            <person name="Barrell B.G."/>
            <person name="Maskell D.J."/>
        </authorList>
    </citation>
    <scope>NUCLEOTIDE SEQUENCE [LARGE SCALE GENOMIC DNA]</scope>
    <source>
        <strain>Tohama I / ATCC BAA-589 / NCTC 13251</strain>
    </source>
</reference>
<gene>
    <name type="ordered locus">BP0148</name>
</gene>
<evidence type="ECO:0000255" key="1"/>
<evidence type="ECO:0000305" key="2"/>
<sequence length="323" mass="34918">MKPFSLLRRIATIALLMAASSAHADTFPSRPIRLIVPFGPGGITDLIARQAALGMAEKLGQPVIIENKPSAGHIVAMQTVAQATPDGYTILLGSNTGFTVAPHMYKNLPFRIDTLQPIAPINTAPTVLLARPDFPANNLTELIQYIKDNPGKLNYGSFGIGTSAHLGMEIMKSDLGLNIMHIPYRGDAQGLLALKAKEVDIAYITLFSAQARIRAGEFKALGVLQNDRLTAFPDIQTTVEVGSKNSGMPVWIAFFAPPGTPDAVMRKLESATRSASTAPAFVEFLHNNGVEPWNPSNQDLMRFIQDQLNRSGPIIQEIGLQPQ</sequence>